<comment type="function">
    <text evidence="1">Catalyzes the formation of S-adenosylmethionine (AdoMet) from methionine and ATP. The overall synthetic reaction is composed of two sequential steps, AdoMet formation and the subsequent tripolyphosphate hydrolysis which occurs prior to release of AdoMet from the enzyme.</text>
</comment>
<comment type="catalytic activity">
    <reaction evidence="1">
        <text>L-methionine + ATP + H2O = S-adenosyl-L-methionine + phosphate + diphosphate</text>
        <dbReference type="Rhea" id="RHEA:21080"/>
        <dbReference type="ChEBI" id="CHEBI:15377"/>
        <dbReference type="ChEBI" id="CHEBI:30616"/>
        <dbReference type="ChEBI" id="CHEBI:33019"/>
        <dbReference type="ChEBI" id="CHEBI:43474"/>
        <dbReference type="ChEBI" id="CHEBI:57844"/>
        <dbReference type="ChEBI" id="CHEBI:59789"/>
        <dbReference type="EC" id="2.5.1.6"/>
    </reaction>
</comment>
<comment type="cofactor">
    <cofactor evidence="1">
        <name>Mg(2+)</name>
        <dbReference type="ChEBI" id="CHEBI:18420"/>
    </cofactor>
    <text evidence="1">Binds 2 divalent ions per subunit.</text>
</comment>
<comment type="cofactor">
    <cofactor evidence="1">
        <name>K(+)</name>
        <dbReference type="ChEBI" id="CHEBI:29103"/>
    </cofactor>
    <text evidence="1">Binds 1 potassium ion per subunit.</text>
</comment>
<comment type="pathway">
    <text evidence="1">Amino-acid biosynthesis; S-adenosyl-L-methionine biosynthesis; S-adenosyl-L-methionine from L-methionine: step 1/1.</text>
</comment>
<comment type="subunit">
    <text evidence="1">Homotetramer; dimer of dimers.</text>
</comment>
<comment type="subcellular location">
    <subcellularLocation>
        <location evidence="1">Cytoplasm</location>
    </subcellularLocation>
</comment>
<comment type="similarity">
    <text evidence="1">Belongs to the AdoMet synthase family.</text>
</comment>
<dbReference type="EC" id="2.5.1.6" evidence="1"/>
<dbReference type="EMBL" id="AJ965256">
    <property type="protein sequence ID" value="CAI82676.1"/>
    <property type="molecule type" value="Genomic_DNA"/>
</dbReference>
<dbReference type="RefSeq" id="WP_011309029.1">
    <property type="nucleotide sequence ID" value="NC_007356.1"/>
</dbReference>
<dbReference type="SMR" id="Q3ZZN7"/>
<dbReference type="KEGG" id="deh:cbdbA476"/>
<dbReference type="HOGENOM" id="CLU_041802_1_1_0"/>
<dbReference type="UniPathway" id="UPA00315">
    <property type="reaction ID" value="UER00080"/>
</dbReference>
<dbReference type="Proteomes" id="UP000000433">
    <property type="component" value="Chromosome"/>
</dbReference>
<dbReference type="GO" id="GO:0005737">
    <property type="term" value="C:cytoplasm"/>
    <property type="evidence" value="ECO:0007669"/>
    <property type="project" value="UniProtKB-SubCell"/>
</dbReference>
<dbReference type="GO" id="GO:0005524">
    <property type="term" value="F:ATP binding"/>
    <property type="evidence" value="ECO:0007669"/>
    <property type="project" value="UniProtKB-UniRule"/>
</dbReference>
<dbReference type="GO" id="GO:0000287">
    <property type="term" value="F:magnesium ion binding"/>
    <property type="evidence" value="ECO:0007669"/>
    <property type="project" value="UniProtKB-UniRule"/>
</dbReference>
<dbReference type="GO" id="GO:0004478">
    <property type="term" value="F:methionine adenosyltransferase activity"/>
    <property type="evidence" value="ECO:0007669"/>
    <property type="project" value="UniProtKB-UniRule"/>
</dbReference>
<dbReference type="GO" id="GO:0006730">
    <property type="term" value="P:one-carbon metabolic process"/>
    <property type="evidence" value="ECO:0007669"/>
    <property type="project" value="UniProtKB-KW"/>
</dbReference>
<dbReference type="GO" id="GO:0006556">
    <property type="term" value="P:S-adenosylmethionine biosynthetic process"/>
    <property type="evidence" value="ECO:0007669"/>
    <property type="project" value="UniProtKB-UniRule"/>
</dbReference>
<dbReference type="CDD" id="cd18079">
    <property type="entry name" value="S-AdoMet_synt"/>
    <property type="match status" value="1"/>
</dbReference>
<dbReference type="FunFam" id="3.30.300.10:FF:000003">
    <property type="entry name" value="S-adenosylmethionine synthase"/>
    <property type="match status" value="1"/>
</dbReference>
<dbReference type="Gene3D" id="3.30.300.10">
    <property type="match status" value="3"/>
</dbReference>
<dbReference type="HAMAP" id="MF_00086">
    <property type="entry name" value="S_AdoMet_synth1"/>
    <property type="match status" value="1"/>
</dbReference>
<dbReference type="InterPro" id="IPR022631">
    <property type="entry name" value="ADOMET_SYNTHASE_CS"/>
</dbReference>
<dbReference type="InterPro" id="IPR022630">
    <property type="entry name" value="S-AdoMet_synt_C"/>
</dbReference>
<dbReference type="InterPro" id="IPR022629">
    <property type="entry name" value="S-AdoMet_synt_central"/>
</dbReference>
<dbReference type="InterPro" id="IPR022628">
    <property type="entry name" value="S-AdoMet_synt_N"/>
</dbReference>
<dbReference type="InterPro" id="IPR002133">
    <property type="entry name" value="S-AdoMet_synthetase"/>
</dbReference>
<dbReference type="InterPro" id="IPR022636">
    <property type="entry name" value="S-AdoMet_synthetase_sfam"/>
</dbReference>
<dbReference type="NCBIfam" id="TIGR01034">
    <property type="entry name" value="metK"/>
    <property type="match status" value="1"/>
</dbReference>
<dbReference type="PANTHER" id="PTHR11964">
    <property type="entry name" value="S-ADENOSYLMETHIONINE SYNTHETASE"/>
    <property type="match status" value="1"/>
</dbReference>
<dbReference type="Pfam" id="PF02773">
    <property type="entry name" value="S-AdoMet_synt_C"/>
    <property type="match status" value="1"/>
</dbReference>
<dbReference type="Pfam" id="PF02772">
    <property type="entry name" value="S-AdoMet_synt_M"/>
    <property type="match status" value="1"/>
</dbReference>
<dbReference type="Pfam" id="PF00438">
    <property type="entry name" value="S-AdoMet_synt_N"/>
    <property type="match status" value="1"/>
</dbReference>
<dbReference type="PIRSF" id="PIRSF000497">
    <property type="entry name" value="MAT"/>
    <property type="match status" value="1"/>
</dbReference>
<dbReference type="SUPFAM" id="SSF55973">
    <property type="entry name" value="S-adenosylmethionine synthetase"/>
    <property type="match status" value="3"/>
</dbReference>
<dbReference type="PROSITE" id="PS00376">
    <property type="entry name" value="ADOMET_SYNTHASE_1"/>
    <property type="match status" value="1"/>
</dbReference>
<dbReference type="PROSITE" id="PS00377">
    <property type="entry name" value="ADOMET_SYNTHASE_2"/>
    <property type="match status" value="1"/>
</dbReference>
<evidence type="ECO:0000255" key="1">
    <source>
        <dbReference type="HAMAP-Rule" id="MF_00086"/>
    </source>
</evidence>
<protein>
    <recommendedName>
        <fullName evidence="1">S-adenosylmethionine synthase</fullName>
        <shortName evidence="1">AdoMet synthase</shortName>
        <ecNumber evidence="1">2.5.1.6</ecNumber>
    </recommendedName>
    <alternativeName>
        <fullName evidence="1">MAT</fullName>
    </alternativeName>
    <alternativeName>
        <fullName evidence="1">Methionine adenosyltransferase</fullName>
    </alternativeName>
</protein>
<keyword id="KW-0067">ATP-binding</keyword>
<keyword id="KW-0963">Cytoplasm</keyword>
<keyword id="KW-0460">Magnesium</keyword>
<keyword id="KW-0479">Metal-binding</keyword>
<keyword id="KW-0547">Nucleotide-binding</keyword>
<keyword id="KW-0554">One-carbon metabolism</keyword>
<keyword id="KW-0630">Potassium</keyword>
<keyword id="KW-0808">Transferase</keyword>
<gene>
    <name evidence="1" type="primary">metK</name>
    <name type="ordered locus">cbdbA476</name>
</gene>
<reference key="1">
    <citation type="journal article" date="2005" name="Nat. Biotechnol.">
        <title>Genome sequence of the chlorinated compound-respiring bacterium Dehalococcoides species strain CBDB1.</title>
        <authorList>
            <person name="Kube M."/>
            <person name="Beck A."/>
            <person name="Zinder S.H."/>
            <person name="Kuhl H."/>
            <person name="Reinhardt R."/>
            <person name="Adrian L."/>
        </authorList>
    </citation>
    <scope>NUCLEOTIDE SEQUENCE [LARGE SCALE GENOMIC DNA]</scope>
    <source>
        <strain>CBDB1</strain>
    </source>
</reference>
<sequence>MSQTFGNSSKYLFTSESVTEGHPDKICDQISDAVLDAIIAKDPTAHVACETAVTNGLVVVMGEITTSCYVEIPELVRGVIKDIGYIKPEYGFDDRTCGVLTSINRQSPDIALGVNKSQEAKSGQVDELDLTGAGDQGMMFGYACTETPEYMPLPISLAHRLSKRLAEVRKNGTLPYLRPDGKSQVTVEYHNGKAKRISSVVIGAQHDPDITTEKIQADIIREVIKPIIPTNLLDEKTEYYVNATGRFVVGGPVSDTGFTGRKILVDTYGGFARHGGGAFSGKDPTKVDRSACYMARYIAKNLVAAGLADRLEIQVAYVIGVAHPLSVSIETFNTARMNHEDILSIIQKHFDLRPEAIIRNLGLRRPIYRQTAAYGHLGRPELDLPWERLDKVDAIKATIESLSVSK</sequence>
<organism>
    <name type="scientific">Dehalococcoides mccartyi (strain CBDB1)</name>
    <dbReference type="NCBI Taxonomy" id="255470"/>
    <lineage>
        <taxon>Bacteria</taxon>
        <taxon>Bacillati</taxon>
        <taxon>Chloroflexota</taxon>
        <taxon>Dehalococcoidia</taxon>
        <taxon>Dehalococcoidales</taxon>
        <taxon>Dehalococcoidaceae</taxon>
        <taxon>Dehalococcoides</taxon>
    </lineage>
</organism>
<feature type="chain" id="PRO_0000240992" description="S-adenosylmethionine synthase">
    <location>
        <begin position="1"/>
        <end position="406"/>
    </location>
</feature>
<feature type="region of interest" description="Flexible loop" evidence="1">
    <location>
        <begin position="106"/>
        <end position="116"/>
    </location>
</feature>
<feature type="binding site" description="in other chain" evidence="1">
    <location>
        <position position="22"/>
    </location>
    <ligand>
        <name>ATP</name>
        <dbReference type="ChEBI" id="CHEBI:30616"/>
        <note>ligand shared between two neighboring subunits</note>
    </ligand>
</feature>
<feature type="binding site" evidence="1">
    <location>
        <position position="24"/>
    </location>
    <ligand>
        <name>Mg(2+)</name>
        <dbReference type="ChEBI" id="CHEBI:18420"/>
    </ligand>
</feature>
<feature type="binding site" evidence="1">
    <location>
        <position position="50"/>
    </location>
    <ligand>
        <name>K(+)</name>
        <dbReference type="ChEBI" id="CHEBI:29103"/>
    </ligand>
</feature>
<feature type="binding site" description="in other chain" evidence="1">
    <location>
        <position position="63"/>
    </location>
    <ligand>
        <name>L-methionine</name>
        <dbReference type="ChEBI" id="CHEBI:57844"/>
        <note>ligand shared between two neighboring subunits</note>
    </ligand>
</feature>
<feature type="binding site" description="in other chain" evidence="1">
    <location>
        <position position="106"/>
    </location>
    <ligand>
        <name>L-methionine</name>
        <dbReference type="ChEBI" id="CHEBI:57844"/>
        <note>ligand shared between two neighboring subunits</note>
    </ligand>
</feature>
<feature type="binding site" description="in other chain" evidence="1">
    <location>
        <begin position="180"/>
        <end position="182"/>
    </location>
    <ligand>
        <name>ATP</name>
        <dbReference type="ChEBI" id="CHEBI:30616"/>
        <note>ligand shared between two neighboring subunits</note>
    </ligand>
</feature>
<feature type="binding site" description="in other chain" evidence="1">
    <location>
        <begin position="246"/>
        <end position="247"/>
    </location>
    <ligand>
        <name>ATP</name>
        <dbReference type="ChEBI" id="CHEBI:30616"/>
        <note>ligand shared between two neighboring subunits</note>
    </ligand>
</feature>
<feature type="binding site" evidence="1">
    <location>
        <position position="255"/>
    </location>
    <ligand>
        <name>ATP</name>
        <dbReference type="ChEBI" id="CHEBI:30616"/>
        <note>ligand shared between two neighboring subunits</note>
    </ligand>
</feature>
<feature type="binding site" evidence="1">
    <location>
        <position position="255"/>
    </location>
    <ligand>
        <name>L-methionine</name>
        <dbReference type="ChEBI" id="CHEBI:57844"/>
        <note>ligand shared between two neighboring subunits</note>
    </ligand>
</feature>
<feature type="binding site" description="in other chain" evidence="1">
    <location>
        <begin position="261"/>
        <end position="262"/>
    </location>
    <ligand>
        <name>ATP</name>
        <dbReference type="ChEBI" id="CHEBI:30616"/>
        <note>ligand shared between two neighboring subunits</note>
    </ligand>
</feature>
<feature type="binding site" evidence="1">
    <location>
        <position position="278"/>
    </location>
    <ligand>
        <name>ATP</name>
        <dbReference type="ChEBI" id="CHEBI:30616"/>
        <note>ligand shared between two neighboring subunits</note>
    </ligand>
</feature>
<feature type="binding site" evidence="1">
    <location>
        <position position="282"/>
    </location>
    <ligand>
        <name>ATP</name>
        <dbReference type="ChEBI" id="CHEBI:30616"/>
        <note>ligand shared between two neighboring subunits</note>
    </ligand>
</feature>
<feature type="binding site" description="in other chain" evidence="1">
    <location>
        <position position="286"/>
    </location>
    <ligand>
        <name>L-methionine</name>
        <dbReference type="ChEBI" id="CHEBI:57844"/>
        <note>ligand shared between two neighboring subunits</note>
    </ligand>
</feature>
<name>METK_DEHMC</name>
<proteinExistence type="inferred from homology"/>
<accession>Q3ZZN7</accession>